<organism>
    <name type="scientific">Dinoroseobacter shibae (strain DSM 16493 / NCIMB 14021 / DFL 12)</name>
    <dbReference type="NCBI Taxonomy" id="398580"/>
    <lineage>
        <taxon>Bacteria</taxon>
        <taxon>Pseudomonadati</taxon>
        <taxon>Pseudomonadota</taxon>
        <taxon>Alphaproteobacteria</taxon>
        <taxon>Rhodobacterales</taxon>
        <taxon>Roseobacteraceae</taxon>
        <taxon>Dinoroseobacter</taxon>
    </lineage>
</organism>
<comment type="function">
    <text evidence="1">Catalyzes the transfer of the enolpyruvyl moiety of phosphoenolpyruvate (PEP) to the 5-hydroxyl of shikimate-3-phosphate (S3P) to produce enolpyruvyl shikimate-3-phosphate and inorganic phosphate.</text>
</comment>
<comment type="catalytic activity">
    <reaction evidence="1">
        <text>3-phosphoshikimate + phosphoenolpyruvate = 5-O-(1-carboxyvinyl)-3-phosphoshikimate + phosphate</text>
        <dbReference type="Rhea" id="RHEA:21256"/>
        <dbReference type="ChEBI" id="CHEBI:43474"/>
        <dbReference type="ChEBI" id="CHEBI:57701"/>
        <dbReference type="ChEBI" id="CHEBI:58702"/>
        <dbReference type="ChEBI" id="CHEBI:145989"/>
        <dbReference type="EC" id="2.5.1.19"/>
    </reaction>
    <physiologicalReaction direction="left-to-right" evidence="1">
        <dbReference type="Rhea" id="RHEA:21257"/>
    </physiologicalReaction>
</comment>
<comment type="pathway">
    <text evidence="1">Metabolic intermediate biosynthesis; chorismate biosynthesis; chorismate from D-erythrose 4-phosphate and phosphoenolpyruvate: step 6/7.</text>
</comment>
<comment type="subunit">
    <text evidence="1">Monomer.</text>
</comment>
<comment type="subcellular location">
    <subcellularLocation>
        <location evidence="1">Cytoplasm</location>
    </subcellularLocation>
</comment>
<comment type="similarity">
    <text evidence="1">Belongs to the EPSP synthase family.</text>
</comment>
<proteinExistence type="inferred from homology"/>
<keyword id="KW-0028">Amino-acid biosynthesis</keyword>
<keyword id="KW-0057">Aromatic amino acid biosynthesis</keyword>
<keyword id="KW-0963">Cytoplasm</keyword>
<keyword id="KW-1185">Reference proteome</keyword>
<keyword id="KW-0808">Transferase</keyword>
<gene>
    <name evidence="1" type="primary">aroA</name>
    <name type="ordered locus">Dshi_1022</name>
</gene>
<reference key="1">
    <citation type="journal article" date="2010" name="ISME J.">
        <title>The complete genome sequence of the algal symbiont Dinoroseobacter shibae: a hitchhiker's guide to life in the sea.</title>
        <authorList>
            <person name="Wagner-Dobler I."/>
            <person name="Ballhausen B."/>
            <person name="Berger M."/>
            <person name="Brinkhoff T."/>
            <person name="Buchholz I."/>
            <person name="Bunk B."/>
            <person name="Cypionka H."/>
            <person name="Daniel R."/>
            <person name="Drepper T."/>
            <person name="Gerdts G."/>
            <person name="Hahnke S."/>
            <person name="Han C."/>
            <person name="Jahn D."/>
            <person name="Kalhoefer D."/>
            <person name="Kiss H."/>
            <person name="Klenk H.P."/>
            <person name="Kyrpides N."/>
            <person name="Liebl W."/>
            <person name="Liesegang H."/>
            <person name="Meincke L."/>
            <person name="Pati A."/>
            <person name="Petersen J."/>
            <person name="Piekarski T."/>
            <person name="Pommerenke C."/>
            <person name="Pradella S."/>
            <person name="Pukall R."/>
            <person name="Rabus R."/>
            <person name="Stackebrandt E."/>
            <person name="Thole S."/>
            <person name="Thompson L."/>
            <person name="Tielen P."/>
            <person name="Tomasch J."/>
            <person name="von Jan M."/>
            <person name="Wanphrut N."/>
            <person name="Wichels A."/>
            <person name="Zech H."/>
            <person name="Simon M."/>
        </authorList>
    </citation>
    <scope>NUCLEOTIDE SEQUENCE [LARGE SCALE GENOMIC DNA]</scope>
    <source>
        <strain>DSM 16493 / NCIMB 14021 / DFL 12</strain>
    </source>
</reference>
<name>AROA_DINSH</name>
<protein>
    <recommendedName>
        <fullName evidence="1">3-phosphoshikimate 1-carboxyvinyltransferase</fullName>
        <ecNumber evidence="1">2.5.1.19</ecNumber>
    </recommendedName>
    <alternativeName>
        <fullName evidence="1">5-enolpyruvylshikimate-3-phosphate synthase</fullName>
        <shortName evidence="1">EPSP synthase</shortName>
        <shortName evidence="1">EPSPS</shortName>
    </alternativeName>
</protein>
<accession>A8LSF0</accession>
<dbReference type="EC" id="2.5.1.19" evidence="1"/>
<dbReference type="EMBL" id="CP000830">
    <property type="protein sequence ID" value="ABV92764.1"/>
    <property type="molecule type" value="Genomic_DNA"/>
</dbReference>
<dbReference type="RefSeq" id="WP_012177695.1">
    <property type="nucleotide sequence ID" value="NC_009952.1"/>
</dbReference>
<dbReference type="SMR" id="A8LSF0"/>
<dbReference type="STRING" id="398580.Dshi_1022"/>
<dbReference type="KEGG" id="dsh:Dshi_1022"/>
<dbReference type="eggNOG" id="COG0128">
    <property type="taxonomic scope" value="Bacteria"/>
</dbReference>
<dbReference type="HOGENOM" id="CLU_024321_0_1_5"/>
<dbReference type="OrthoDB" id="9809920at2"/>
<dbReference type="UniPathway" id="UPA00053">
    <property type="reaction ID" value="UER00089"/>
</dbReference>
<dbReference type="Proteomes" id="UP000006833">
    <property type="component" value="Chromosome"/>
</dbReference>
<dbReference type="GO" id="GO:0005737">
    <property type="term" value="C:cytoplasm"/>
    <property type="evidence" value="ECO:0007669"/>
    <property type="project" value="UniProtKB-SubCell"/>
</dbReference>
<dbReference type="GO" id="GO:0003866">
    <property type="term" value="F:3-phosphoshikimate 1-carboxyvinyltransferase activity"/>
    <property type="evidence" value="ECO:0007669"/>
    <property type="project" value="UniProtKB-UniRule"/>
</dbReference>
<dbReference type="GO" id="GO:0008652">
    <property type="term" value="P:amino acid biosynthetic process"/>
    <property type="evidence" value="ECO:0007669"/>
    <property type="project" value="UniProtKB-KW"/>
</dbReference>
<dbReference type="GO" id="GO:0009073">
    <property type="term" value="P:aromatic amino acid family biosynthetic process"/>
    <property type="evidence" value="ECO:0007669"/>
    <property type="project" value="UniProtKB-KW"/>
</dbReference>
<dbReference type="GO" id="GO:0009423">
    <property type="term" value="P:chorismate biosynthetic process"/>
    <property type="evidence" value="ECO:0007669"/>
    <property type="project" value="UniProtKB-UniRule"/>
</dbReference>
<dbReference type="CDD" id="cd01556">
    <property type="entry name" value="EPSP_synthase"/>
    <property type="match status" value="1"/>
</dbReference>
<dbReference type="FunFam" id="3.65.10.10:FF:000005">
    <property type="entry name" value="3-phosphoshikimate 1-carboxyvinyltransferase"/>
    <property type="match status" value="1"/>
</dbReference>
<dbReference type="Gene3D" id="3.65.10.10">
    <property type="entry name" value="Enolpyruvate transferase domain"/>
    <property type="match status" value="2"/>
</dbReference>
<dbReference type="HAMAP" id="MF_00210">
    <property type="entry name" value="EPSP_synth"/>
    <property type="match status" value="1"/>
</dbReference>
<dbReference type="InterPro" id="IPR001986">
    <property type="entry name" value="Enolpyruvate_Tfrase_dom"/>
</dbReference>
<dbReference type="InterPro" id="IPR036968">
    <property type="entry name" value="Enolpyruvate_Tfrase_sf"/>
</dbReference>
<dbReference type="InterPro" id="IPR006264">
    <property type="entry name" value="EPSP_synthase"/>
</dbReference>
<dbReference type="InterPro" id="IPR023193">
    <property type="entry name" value="EPSP_synthase_CS"/>
</dbReference>
<dbReference type="InterPro" id="IPR013792">
    <property type="entry name" value="RNA3'P_cycl/enolpyr_Trfase_a/b"/>
</dbReference>
<dbReference type="NCBIfam" id="TIGR01356">
    <property type="entry name" value="aroA"/>
    <property type="match status" value="1"/>
</dbReference>
<dbReference type="PANTHER" id="PTHR21090">
    <property type="entry name" value="AROM/DEHYDROQUINATE SYNTHASE"/>
    <property type="match status" value="1"/>
</dbReference>
<dbReference type="PANTHER" id="PTHR21090:SF5">
    <property type="entry name" value="PENTAFUNCTIONAL AROM POLYPEPTIDE"/>
    <property type="match status" value="1"/>
</dbReference>
<dbReference type="Pfam" id="PF00275">
    <property type="entry name" value="EPSP_synthase"/>
    <property type="match status" value="1"/>
</dbReference>
<dbReference type="PIRSF" id="PIRSF000505">
    <property type="entry name" value="EPSPS"/>
    <property type="match status" value="1"/>
</dbReference>
<dbReference type="SUPFAM" id="SSF55205">
    <property type="entry name" value="EPT/RTPC-like"/>
    <property type="match status" value="1"/>
</dbReference>
<dbReference type="PROSITE" id="PS00104">
    <property type="entry name" value="EPSP_SYNTHASE_1"/>
    <property type="match status" value="1"/>
</dbReference>
<dbReference type="PROSITE" id="PS00885">
    <property type="entry name" value="EPSP_SYNTHASE_2"/>
    <property type="match status" value="1"/>
</dbReference>
<sequence length="450" mass="46479">MSAHGDPIPMTAHPSGPLSGTAQVPGDKSISHRSLILGALAVGETKVTGLLEGQDVLDTARAMQAFGAEVIQHAPGAWSVHGVGTGGFAEPEDVIDCGNSGTGVRLIMGAMATTPITATFTGDASLRSRPMGRITDPLAGFGTTAVGRRGGRLPMTLTGAADPVPVRYTVPVPSAQVKSAVLLAGLNAPGQTVVIEAEATRDHSERMLRGFGAEISVESAPEGNVITLTGQPELRPQTIVVPRDPSSAAFPVAVGLIVPGSDVLVPGIGLNPTRAGLYTTLQEMGAELSFENMREEGGEPVADLRARFSDAMQGIEVPPERAPSMIDEYPILSVIAAYATGRTVMRGVKELRVKESDRIDAMARGLEACGVRVEEDEDTLIVHGMGPGGVPGGATCASHLDHRIAMSFLCCGLAAQTPVSVDDGGPIATSFPIFEPLMTALGATLTRDST</sequence>
<evidence type="ECO:0000255" key="1">
    <source>
        <dbReference type="HAMAP-Rule" id="MF_00210"/>
    </source>
</evidence>
<evidence type="ECO:0000256" key="2">
    <source>
        <dbReference type="SAM" id="MobiDB-lite"/>
    </source>
</evidence>
<feature type="chain" id="PRO_1000077987" description="3-phosphoshikimate 1-carboxyvinyltransferase">
    <location>
        <begin position="1"/>
        <end position="450"/>
    </location>
</feature>
<feature type="region of interest" description="Disordered" evidence="2">
    <location>
        <begin position="1"/>
        <end position="26"/>
    </location>
</feature>
<feature type="active site" description="Proton acceptor" evidence="1">
    <location>
        <position position="327"/>
    </location>
</feature>
<feature type="binding site" evidence="1">
    <location>
        <position position="28"/>
    </location>
    <ligand>
        <name>3-phosphoshikimate</name>
        <dbReference type="ChEBI" id="CHEBI:145989"/>
    </ligand>
</feature>
<feature type="binding site" evidence="1">
    <location>
        <position position="28"/>
    </location>
    <ligand>
        <name>phosphoenolpyruvate</name>
        <dbReference type="ChEBI" id="CHEBI:58702"/>
    </ligand>
</feature>
<feature type="binding site" evidence="1">
    <location>
        <position position="29"/>
    </location>
    <ligand>
        <name>3-phosphoshikimate</name>
        <dbReference type="ChEBI" id="CHEBI:145989"/>
    </ligand>
</feature>
<feature type="binding site" evidence="1">
    <location>
        <position position="33"/>
    </location>
    <ligand>
        <name>3-phosphoshikimate</name>
        <dbReference type="ChEBI" id="CHEBI:145989"/>
    </ligand>
</feature>
<feature type="binding site" evidence="1">
    <location>
        <position position="101"/>
    </location>
    <ligand>
        <name>phosphoenolpyruvate</name>
        <dbReference type="ChEBI" id="CHEBI:58702"/>
    </ligand>
</feature>
<feature type="binding site" evidence="1">
    <location>
        <position position="129"/>
    </location>
    <ligand>
        <name>phosphoenolpyruvate</name>
        <dbReference type="ChEBI" id="CHEBI:58702"/>
    </ligand>
</feature>
<feature type="binding site" evidence="1">
    <location>
        <position position="174"/>
    </location>
    <ligand>
        <name>3-phosphoshikimate</name>
        <dbReference type="ChEBI" id="CHEBI:145989"/>
    </ligand>
</feature>
<feature type="binding site" evidence="1">
    <location>
        <position position="176"/>
    </location>
    <ligand>
        <name>3-phosphoshikimate</name>
        <dbReference type="ChEBI" id="CHEBI:145989"/>
    </ligand>
</feature>
<feature type="binding site" evidence="1">
    <location>
        <position position="176"/>
    </location>
    <ligand>
        <name>phosphoenolpyruvate</name>
        <dbReference type="ChEBI" id="CHEBI:58702"/>
    </ligand>
</feature>
<feature type="binding site" evidence="1">
    <location>
        <position position="327"/>
    </location>
    <ligand>
        <name>3-phosphoshikimate</name>
        <dbReference type="ChEBI" id="CHEBI:145989"/>
    </ligand>
</feature>
<feature type="binding site" evidence="1">
    <location>
        <position position="354"/>
    </location>
    <ligand>
        <name>3-phosphoshikimate</name>
        <dbReference type="ChEBI" id="CHEBI:145989"/>
    </ligand>
</feature>
<feature type="binding site" evidence="1">
    <location>
        <position position="358"/>
    </location>
    <ligand>
        <name>phosphoenolpyruvate</name>
        <dbReference type="ChEBI" id="CHEBI:58702"/>
    </ligand>
</feature>
<feature type="binding site" evidence="1">
    <location>
        <position position="403"/>
    </location>
    <ligand>
        <name>phosphoenolpyruvate</name>
        <dbReference type="ChEBI" id="CHEBI:58702"/>
    </ligand>
</feature>